<evidence type="ECO:0000255" key="1">
    <source>
        <dbReference type="HAMAP-Rule" id="MF_01145"/>
    </source>
</evidence>
<organism>
    <name type="scientific">Geobacillus sp. (strain WCH70)</name>
    <dbReference type="NCBI Taxonomy" id="471223"/>
    <lineage>
        <taxon>Bacteria</taxon>
        <taxon>Bacillati</taxon>
        <taxon>Bacillota</taxon>
        <taxon>Bacilli</taxon>
        <taxon>Bacillales</taxon>
        <taxon>Anoxybacillaceae</taxon>
        <taxon>Geobacillus</taxon>
    </lineage>
</organism>
<dbReference type="EC" id="5.2.1.8" evidence="1"/>
<dbReference type="EMBL" id="CP001638">
    <property type="protein sequence ID" value="ACS23536.1"/>
    <property type="molecule type" value="Genomic_DNA"/>
</dbReference>
<dbReference type="SMR" id="C5D6L9"/>
<dbReference type="STRING" id="471223.GWCH70_0643"/>
<dbReference type="KEGG" id="gwc:GWCH70_0643"/>
<dbReference type="eggNOG" id="COG0760">
    <property type="taxonomic scope" value="Bacteria"/>
</dbReference>
<dbReference type="HOGENOM" id="CLU_034646_6_1_9"/>
<dbReference type="OrthoDB" id="14196at2"/>
<dbReference type="GO" id="GO:0005886">
    <property type="term" value="C:plasma membrane"/>
    <property type="evidence" value="ECO:0007669"/>
    <property type="project" value="UniProtKB-SubCell"/>
</dbReference>
<dbReference type="GO" id="GO:0003755">
    <property type="term" value="F:peptidyl-prolyl cis-trans isomerase activity"/>
    <property type="evidence" value="ECO:0007669"/>
    <property type="project" value="UniProtKB-UniRule"/>
</dbReference>
<dbReference type="GO" id="GO:0006457">
    <property type="term" value="P:protein folding"/>
    <property type="evidence" value="ECO:0007669"/>
    <property type="project" value="UniProtKB-UniRule"/>
</dbReference>
<dbReference type="GO" id="GO:0015031">
    <property type="term" value="P:protein transport"/>
    <property type="evidence" value="ECO:0007669"/>
    <property type="project" value="InterPro"/>
</dbReference>
<dbReference type="Gene3D" id="3.10.50.40">
    <property type="match status" value="1"/>
</dbReference>
<dbReference type="Gene3D" id="1.10.3120.10">
    <property type="entry name" value="Trigger factor, C-terminal domain"/>
    <property type="match status" value="1"/>
</dbReference>
<dbReference type="HAMAP" id="MF_01145">
    <property type="entry name" value="Foldase_PrsA"/>
    <property type="match status" value="1"/>
</dbReference>
<dbReference type="InterPro" id="IPR023059">
    <property type="entry name" value="Foldase_PrsA"/>
</dbReference>
<dbReference type="InterPro" id="IPR046357">
    <property type="entry name" value="PPIase_dom_sf"/>
</dbReference>
<dbReference type="InterPro" id="IPR000297">
    <property type="entry name" value="PPIase_PpiC"/>
</dbReference>
<dbReference type="InterPro" id="IPR023058">
    <property type="entry name" value="PPIase_PpiC_CS"/>
</dbReference>
<dbReference type="InterPro" id="IPR050245">
    <property type="entry name" value="PrsA_foldase"/>
</dbReference>
<dbReference type="InterPro" id="IPR008880">
    <property type="entry name" value="Trigger_fac_C"/>
</dbReference>
<dbReference type="InterPro" id="IPR037041">
    <property type="entry name" value="Trigger_fac_C_sf"/>
</dbReference>
<dbReference type="InterPro" id="IPR027304">
    <property type="entry name" value="Trigger_fact/SurA_dom_sf"/>
</dbReference>
<dbReference type="PANTHER" id="PTHR47245:SF1">
    <property type="entry name" value="FOLDASE PROTEIN PRSA"/>
    <property type="match status" value="1"/>
</dbReference>
<dbReference type="PANTHER" id="PTHR47245">
    <property type="entry name" value="PEPTIDYLPROLYL ISOMERASE"/>
    <property type="match status" value="1"/>
</dbReference>
<dbReference type="Pfam" id="PF13616">
    <property type="entry name" value="Rotamase_3"/>
    <property type="match status" value="1"/>
</dbReference>
<dbReference type="Pfam" id="PF05698">
    <property type="entry name" value="Trigger_C"/>
    <property type="match status" value="1"/>
</dbReference>
<dbReference type="SUPFAM" id="SSF54534">
    <property type="entry name" value="FKBP-like"/>
    <property type="match status" value="1"/>
</dbReference>
<dbReference type="SUPFAM" id="SSF109998">
    <property type="entry name" value="Triger factor/SurA peptide-binding domain-like"/>
    <property type="match status" value="1"/>
</dbReference>
<dbReference type="PROSITE" id="PS01096">
    <property type="entry name" value="PPIC_PPIASE_1"/>
    <property type="match status" value="1"/>
</dbReference>
<dbReference type="PROSITE" id="PS50198">
    <property type="entry name" value="PPIC_PPIASE_2"/>
    <property type="match status" value="1"/>
</dbReference>
<dbReference type="PROSITE" id="PS51257">
    <property type="entry name" value="PROKAR_LIPOPROTEIN"/>
    <property type="match status" value="1"/>
</dbReference>
<reference key="1">
    <citation type="submission" date="2009-06" db="EMBL/GenBank/DDBJ databases">
        <title>Complete sequence of chromosome of Geopacillus sp. WCH70.</title>
        <authorList>
            <consortium name="US DOE Joint Genome Institute"/>
            <person name="Lucas S."/>
            <person name="Copeland A."/>
            <person name="Lapidus A."/>
            <person name="Glavina del Rio T."/>
            <person name="Dalin E."/>
            <person name="Tice H."/>
            <person name="Bruce D."/>
            <person name="Goodwin L."/>
            <person name="Pitluck S."/>
            <person name="Chertkov O."/>
            <person name="Brettin T."/>
            <person name="Detter J.C."/>
            <person name="Han C."/>
            <person name="Larimer F."/>
            <person name="Land M."/>
            <person name="Hauser L."/>
            <person name="Kyrpides N."/>
            <person name="Mikhailova N."/>
            <person name="Brumm P."/>
            <person name="Mead D.A."/>
            <person name="Richardson P."/>
        </authorList>
    </citation>
    <scope>NUCLEOTIDE SEQUENCE [LARGE SCALE GENOMIC DNA]</scope>
    <source>
        <strain>WCH70</strain>
    </source>
</reference>
<name>PRSA_GEOSW</name>
<accession>C5D6L9</accession>
<comment type="function">
    <text evidence="1">Plays a major role in protein secretion by helping the post-translocational extracellular folding of several secreted proteins.</text>
</comment>
<comment type="catalytic activity">
    <reaction evidence="1">
        <text>[protein]-peptidylproline (omega=180) = [protein]-peptidylproline (omega=0)</text>
        <dbReference type="Rhea" id="RHEA:16237"/>
        <dbReference type="Rhea" id="RHEA-COMP:10747"/>
        <dbReference type="Rhea" id="RHEA-COMP:10748"/>
        <dbReference type="ChEBI" id="CHEBI:83833"/>
        <dbReference type="ChEBI" id="CHEBI:83834"/>
        <dbReference type="EC" id="5.2.1.8"/>
    </reaction>
</comment>
<comment type="subcellular location">
    <subcellularLocation>
        <location evidence="1">Cell membrane</location>
        <topology evidence="1">Lipid-anchor</topology>
    </subcellularLocation>
</comment>
<comment type="similarity">
    <text evidence="1">Belongs to the PrsA family.</text>
</comment>
<proteinExistence type="inferred from homology"/>
<keyword id="KW-1003">Cell membrane</keyword>
<keyword id="KW-0413">Isomerase</keyword>
<keyword id="KW-0449">Lipoprotein</keyword>
<keyword id="KW-0472">Membrane</keyword>
<keyword id="KW-0564">Palmitate</keyword>
<keyword id="KW-0697">Rotamase</keyword>
<keyword id="KW-0732">Signal</keyword>
<feature type="signal peptide" evidence="1">
    <location>
        <begin position="1"/>
        <end position="18"/>
    </location>
</feature>
<feature type="chain" id="PRO_5000470097" description="Foldase protein PrsA">
    <location>
        <begin position="19"/>
        <end position="276"/>
    </location>
</feature>
<feature type="domain" description="PpiC" evidence="1">
    <location>
        <begin position="133"/>
        <end position="223"/>
    </location>
</feature>
<feature type="lipid moiety-binding region" description="N-palmitoyl cysteine" evidence="1">
    <location>
        <position position="19"/>
    </location>
</feature>
<feature type="lipid moiety-binding region" description="S-diacylglycerol cysteine" evidence="1">
    <location>
        <position position="19"/>
    </location>
</feature>
<protein>
    <recommendedName>
        <fullName evidence="1">Foldase protein PrsA</fullName>
        <ecNumber evidence="1">5.2.1.8</ecNumber>
    </recommendedName>
</protein>
<sequence>MRKWMIVAAVAAVFGLSACNNGDSEVIVKTKDGNITKEEFYNEMKARVGKEVIRDLVHEKVLSKKYKVTDKEIDKEIENLKEMYGTQYDLVVQQNGEKAIRDMVKLDLLRQKAAMEDIKVTDKELKDYYKNYKPKIRASHILVKDEKTAEEIKTKLDKGEDFAKLAKQYSQDPGSAPNGGDLGWFGPGKMVKEFEDAAYKLKVGQVSDPVKTDYGYHIIKVTDKEEKKPFNEMKEEIEFEVKQSKLDPAKVQSKVEKLIKDAKVEIEDKDLQDVLK</sequence>
<gene>
    <name evidence="1" type="primary">prsA</name>
    <name type="ordered locus">GWCH70_0643</name>
</gene>